<gene>
    <name type="primary">inlB</name>
</gene>
<protein>
    <recommendedName>
        <fullName evidence="15">Internalin B</fullName>
        <shortName>InlB</shortName>
    </recommendedName>
    <alternativeName>
        <fullName>Invasion protein InlB</fullName>
    </alternativeName>
</protein>
<keyword id="KW-0002">3D-structure</keyword>
<keyword id="KW-0106">Calcium</keyword>
<keyword id="KW-1003">Cell membrane</keyword>
<keyword id="KW-0358">Heparin-binding</keyword>
<keyword id="KW-0433">Leucine-rich repeat</keyword>
<keyword id="KW-0446">Lipid-binding</keyword>
<keyword id="KW-0472">Membrane</keyword>
<keyword id="KW-0479">Metal-binding</keyword>
<keyword id="KW-0677">Repeat</keyword>
<keyword id="KW-0964">Secreted</keyword>
<keyword id="KW-0732">Signal</keyword>
<keyword id="KW-0843">Virulence</keyword>
<dbReference type="EMBL" id="M67471">
    <property type="protein sequence ID" value="AAA25290.1"/>
    <property type="molecule type" value="Genomic_DNA"/>
</dbReference>
<dbReference type="EMBL" id="AJ012346">
    <property type="protein sequence ID" value="CAC20629.1"/>
    <property type="molecule type" value="Genomic_DNA"/>
</dbReference>
<dbReference type="PIR" id="C39930">
    <property type="entry name" value="C39930"/>
</dbReference>
<dbReference type="RefSeq" id="WP_014930830.1">
    <property type="nucleotide sequence ID" value="NC_022568.1"/>
</dbReference>
<dbReference type="PDB" id="1D0B">
    <property type="method" value="X-ray"/>
    <property type="resolution" value="1.86 A"/>
    <property type="chains" value="A=36-248"/>
</dbReference>
<dbReference type="PDB" id="1M9S">
    <property type="method" value="X-ray"/>
    <property type="resolution" value="2.65 A"/>
    <property type="chains" value="A=36-630"/>
</dbReference>
<dbReference type="PDB" id="1OTM">
    <property type="method" value="X-ray"/>
    <property type="resolution" value="1.93 A"/>
    <property type="chains" value="A=36-248"/>
</dbReference>
<dbReference type="PDB" id="1OTN">
    <property type="method" value="X-ray"/>
    <property type="resolution" value="1.97 A"/>
    <property type="chains" value="A=36-248"/>
</dbReference>
<dbReference type="PDB" id="1OTO">
    <property type="method" value="X-ray"/>
    <property type="resolution" value="1.96 A"/>
    <property type="chains" value="A=36-248"/>
</dbReference>
<dbReference type="PDB" id="6GCU">
    <property type="method" value="X-ray"/>
    <property type="resolution" value="6.00 A"/>
    <property type="chains" value="B/E=36-321"/>
</dbReference>
<dbReference type="PDB" id="6U12">
    <property type="method" value="X-ray"/>
    <property type="resolution" value="1.56 A"/>
    <property type="chains" value="A=36-248"/>
</dbReference>
<dbReference type="PDBsum" id="1D0B"/>
<dbReference type="PDBsum" id="1M9S"/>
<dbReference type="PDBsum" id="1OTM"/>
<dbReference type="PDBsum" id="1OTN"/>
<dbReference type="PDBsum" id="1OTO"/>
<dbReference type="PDBsum" id="6GCU"/>
<dbReference type="PDBsum" id="6U12"/>
<dbReference type="SASBDB" id="P0DQD3"/>
<dbReference type="SMR" id="P0DQD3"/>
<dbReference type="ABCD" id="P0DQD3">
    <property type="antibodies" value="12 sequenced antibodies"/>
</dbReference>
<dbReference type="Reactome" id="R-HSA-8875360">
    <property type="pathway name" value="InlB-mediated entry of Listeria monocytogenes into host cell"/>
</dbReference>
<dbReference type="EvolutionaryTrace" id="P0DQD3"/>
<dbReference type="PHI-base" id="PHI:11651"/>
<dbReference type="GO" id="GO:0009986">
    <property type="term" value="C:cell surface"/>
    <property type="evidence" value="ECO:0007669"/>
    <property type="project" value="UniProtKB-SubCell"/>
</dbReference>
<dbReference type="GO" id="GO:0005576">
    <property type="term" value="C:extracellular region"/>
    <property type="evidence" value="ECO:0007669"/>
    <property type="project" value="UniProtKB-SubCell"/>
</dbReference>
<dbReference type="GO" id="GO:0009274">
    <property type="term" value="C:peptidoglycan-based cell wall"/>
    <property type="evidence" value="ECO:0000304"/>
    <property type="project" value="Reactome"/>
</dbReference>
<dbReference type="GO" id="GO:0005886">
    <property type="term" value="C:plasma membrane"/>
    <property type="evidence" value="ECO:0007669"/>
    <property type="project" value="UniProtKB-SubCell"/>
</dbReference>
<dbReference type="GO" id="GO:0008201">
    <property type="term" value="F:heparin binding"/>
    <property type="evidence" value="ECO:0007669"/>
    <property type="project" value="UniProtKB-KW"/>
</dbReference>
<dbReference type="GO" id="GO:0008289">
    <property type="term" value="F:lipid binding"/>
    <property type="evidence" value="ECO:0007669"/>
    <property type="project" value="UniProtKB-KW"/>
</dbReference>
<dbReference type="GO" id="GO:0046872">
    <property type="term" value="F:metal ion binding"/>
    <property type="evidence" value="ECO:0007669"/>
    <property type="project" value="UniProtKB-KW"/>
</dbReference>
<dbReference type="GO" id="GO:0035635">
    <property type="term" value="P:entry of bacterium into host cell"/>
    <property type="evidence" value="ECO:0000314"/>
    <property type="project" value="GO_Central"/>
</dbReference>
<dbReference type="FunFam" id="3.80.10.10:FF:001164">
    <property type="entry name" value="GH01279p"/>
    <property type="match status" value="1"/>
</dbReference>
<dbReference type="FunFam" id="2.30.30.170:FF:000001">
    <property type="entry name" value="Internalin B"/>
    <property type="match status" value="1"/>
</dbReference>
<dbReference type="Gene3D" id="2.30.30.170">
    <property type="match status" value="3"/>
</dbReference>
<dbReference type="Gene3D" id="2.60.40.1220">
    <property type="match status" value="1"/>
</dbReference>
<dbReference type="Gene3D" id="2.60.40.4270">
    <property type="entry name" value="Listeria-Bacteroides repeat domain"/>
    <property type="match status" value="1"/>
</dbReference>
<dbReference type="Gene3D" id="3.80.10.10">
    <property type="entry name" value="Ribonuclease Inhibitor"/>
    <property type="match status" value="1"/>
</dbReference>
<dbReference type="InterPro" id="IPR014755">
    <property type="entry name" value="Cu-Rt/internalin_Ig-like"/>
</dbReference>
<dbReference type="InterPro" id="IPR025987">
    <property type="entry name" value="GW_dom"/>
</dbReference>
<dbReference type="InterPro" id="IPR038200">
    <property type="entry name" value="GW_dom_sf"/>
</dbReference>
<dbReference type="InterPro" id="IPR014756">
    <property type="entry name" value="Ig_E-set"/>
</dbReference>
<dbReference type="InterPro" id="IPR012569">
    <property type="entry name" value="Inl_IR"/>
</dbReference>
<dbReference type="InterPro" id="IPR013378">
    <property type="entry name" value="InlB-like_B-rpt"/>
</dbReference>
<dbReference type="InterPro" id="IPR024634">
    <property type="entry name" value="Internalin_N"/>
</dbReference>
<dbReference type="InterPro" id="IPR001611">
    <property type="entry name" value="Leu-rich_rpt"/>
</dbReference>
<dbReference type="InterPro" id="IPR025875">
    <property type="entry name" value="Leu-rich_rpt_4"/>
</dbReference>
<dbReference type="InterPro" id="IPR003591">
    <property type="entry name" value="Leu-rich_rpt_typical-subtyp"/>
</dbReference>
<dbReference type="InterPro" id="IPR042229">
    <property type="entry name" value="Listeria/Bacterioides_rpt_sf"/>
</dbReference>
<dbReference type="InterPro" id="IPR032675">
    <property type="entry name" value="LRR_dom_sf"/>
</dbReference>
<dbReference type="InterPro" id="IPR050836">
    <property type="entry name" value="SDS22/Internalin_LRR"/>
</dbReference>
<dbReference type="NCBIfam" id="NF033202">
    <property type="entry name" value="GW_glycos_SH3"/>
    <property type="match status" value="3"/>
</dbReference>
<dbReference type="NCBIfam" id="TIGR02543">
    <property type="entry name" value="List_Bact_rpt"/>
    <property type="match status" value="1"/>
</dbReference>
<dbReference type="PANTHER" id="PTHR46652">
    <property type="entry name" value="LEUCINE-RICH REPEAT AND IQ DOMAIN-CONTAINING PROTEIN 1-RELATED"/>
    <property type="match status" value="1"/>
</dbReference>
<dbReference type="PANTHER" id="PTHR46652:SF3">
    <property type="entry name" value="LEUCINE-RICH REPEAT-CONTAINING PROTEIN 9"/>
    <property type="match status" value="1"/>
</dbReference>
<dbReference type="Pfam" id="PF09479">
    <property type="entry name" value="Flg_new"/>
    <property type="match status" value="1"/>
</dbReference>
<dbReference type="Pfam" id="PF13457">
    <property type="entry name" value="GW"/>
    <property type="match status" value="3"/>
</dbReference>
<dbReference type="Pfam" id="PF12354">
    <property type="entry name" value="Internalin_N"/>
    <property type="match status" value="1"/>
</dbReference>
<dbReference type="Pfam" id="PF12799">
    <property type="entry name" value="LRR_4"/>
    <property type="match status" value="2"/>
</dbReference>
<dbReference type="Pfam" id="PF08191">
    <property type="entry name" value="LRR_adjacent"/>
    <property type="match status" value="1"/>
</dbReference>
<dbReference type="SMART" id="SM00365">
    <property type="entry name" value="LRR_SD22"/>
    <property type="match status" value="6"/>
</dbReference>
<dbReference type="SMART" id="SM00369">
    <property type="entry name" value="LRR_TYP"/>
    <property type="match status" value="5"/>
</dbReference>
<dbReference type="SUPFAM" id="SSF81296">
    <property type="entry name" value="E set domains"/>
    <property type="match status" value="1"/>
</dbReference>
<dbReference type="SUPFAM" id="SSF52058">
    <property type="entry name" value="L domain-like"/>
    <property type="match status" value="1"/>
</dbReference>
<dbReference type="SUPFAM" id="SSF82057">
    <property type="entry name" value="Prokaryotic SH3-related domain"/>
    <property type="match status" value="3"/>
</dbReference>
<dbReference type="PROSITE" id="PS51780">
    <property type="entry name" value="GW"/>
    <property type="match status" value="3"/>
</dbReference>
<dbReference type="PROSITE" id="PS51450">
    <property type="entry name" value="LRR"/>
    <property type="match status" value="6"/>
</dbReference>
<feature type="signal peptide" evidence="2">
    <location>
        <begin position="1"/>
        <end position="30"/>
    </location>
</feature>
<feature type="chain" id="PRO_0000446289" description="Internalin B">
    <location>
        <begin position="31"/>
        <end position="630"/>
    </location>
</feature>
<feature type="domain" description="LRRNT">
    <location>
        <begin position="31"/>
        <end position="76"/>
    </location>
</feature>
<feature type="repeat" description="LRR 1" evidence="2">
    <location>
        <begin position="75"/>
        <end position="97"/>
    </location>
</feature>
<feature type="repeat" description="LRR 2" evidence="2">
    <location>
        <begin position="98"/>
        <end position="121"/>
    </location>
</feature>
<feature type="repeat" description="LRR 3" evidence="2">
    <location>
        <begin position="123"/>
        <end position="141"/>
    </location>
</feature>
<feature type="repeat" description="LRR 4" evidence="2">
    <location>
        <begin position="142"/>
        <end position="163"/>
    </location>
</feature>
<feature type="repeat" description="LRR 5" evidence="2">
    <location>
        <begin position="164"/>
        <end position="187"/>
    </location>
</feature>
<feature type="repeat" description="LRR 6" evidence="2">
    <location>
        <begin position="189"/>
        <end position="207"/>
    </location>
</feature>
<feature type="repeat" description="LRR 7" evidence="2">
    <location>
        <begin position="208"/>
        <end position="231"/>
    </location>
</feature>
<feature type="domain" description="LRRCT">
    <location>
        <begin position="241"/>
        <end position="330"/>
    </location>
</feature>
<feature type="domain" description="GW 1" evidence="3">
    <location>
        <begin position="393"/>
        <end position="467"/>
    </location>
</feature>
<feature type="domain" description="GW 2" evidence="3">
    <location>
        <begin position="472"/>
        <end position="550"/>
    </location>
</feature>
<feature type="domain" description="GW 3" evidence="3">
    <location>
        <begin position="553"/>
        <end position="630"/>
    </location>
</feature>
<feature type="region of interest" description="Ig-like region" evidence="18 19">
    <location>
        <begin position="241"/>
        <end position="319"/>
    </location>
</feature>
<feature type="region of interest" description="B repeat region" evidence="18 19">
    <location>
        <begin position="320"/>
        <end position="392"/>
    </location>
</feature>
<feature type="region of interest" description="GW repeat region, necessary and sufficient for cell surface attachment, interacts with host C1QBP and with heparin" evidence="4 8 14 15">
    <location>
        <begin position="399"/>
        <end position="630"/>
    </location>
</feature>
<feature type="binding site" evidence="5 9 23 27">
    <location>
        <position position="49"/>
    </location>
    <ligand>
        <name>Ca(2+)</name>
        <dbReference type="ChEBI" id="CHEBI:29108"/>
        <label>1</label>
    </ligand>
</feature>
<feature type="binding site" evidence="5 9 23 27">
    <location>
        <position position="51"/>
    </location>
    <ligand>
        <name>Ca(2+)</name>
        <dbReference type="ChEBI" id="CHEBI:29108"/>
        <label>1</label>
    </ligand>
</feature>
<feature type="binding site" evidence="5 9 23 26">
    <location>
        <position position="55"/>
    </location>
    <ligand>
        <name>Ca(2+)</name>
        <dbReference type="ChEBI" id="CHEBI:29108"/>
        <label>2</label>
    </ligand>
</feature>
<feature type="binding site" evidence="5 9 23 26">
    <location>
        <position position="59"/>
    </location>
    <ligand>
        <name>Ca(2+)</name>
        <dbReference type="ChEBI" id="CHEBI:29108"/>
        <label>2</label>
    </ligand>
</feature>
<feature type="mutagenesis site" description="No Ca(2+) binding, no change in Tyr-phosphorylation of host MET, wild-type invasion of host Vero cells." evidence="9">
    <original>DAFAETIKD</original>
    <variation>AAFAETIKA</variation>
    <location>
        <begin position="51"/>
        <end position="59"/>
    </location>
</feature>
<feature type="mutagenesis site" description="Only binds 1 Ca(2+), no change in Tyr-phosphorylation of host MET, wild-type invasion of host Vero cells." evidence="9">
    <original>D</original>
    <variation>A</variation>
    <location>
        <position position="51"/>
    </location>
</feature>
<feature type="mutagenesis site" description="No Ca(2+) binding, no change in Tyr-phosphorylation of host MET, wild-type invasion of host Vero cells." evidence="9">
    <original>D</original>
    <variation>A</variation>
    <location>
        <position position="59"/>
    </location>
</feature>
<feature type="sequence conflict" description="In Ref. 2; CAC20629." ref="2">
    <original>S</original>
    <variation>P</variation>
    <location>
        <position position="41"/>
    </location>
</feature>
<feature type="sequence conflict" description="In Ref. 2; CAC20629." ref="2">
    <original>P</original>
    <variation>S</variation>
    <location>
        <position position="49"/>
    </location>
</feature>
<feature type="sequence conflict" description="In Ref. 2; CAC20629." ref="2">
    <original>T</original>
    <variation>A</variation>
    <location>
        <position position="117"/>
    </location>
</feature>
<feature type="sequence conflict" description="In Ref. 2; CAC20629." ref="2">
    <original>I</original>
    <variation>V</variation>
    <location>
        <position position="132"/>
    </location>
</feature>
<feature type="sequence conflict" description="In Ref. 2; CAC20629." ref="2">
    <original>T</original>
    <variation>A</variation>
    <location>
        <position position="396"/>
    </location>
</feature>
<feature type="helix" evidence="28">
    <location>
        <begin position="44"/>
        <end position="47"/>
    </location>
</feature>
<feature type="helix" evidence="28">
    <location>
        <begin position="51"/>
        <end position="60"/>
    </location>
</feature>
<feature type="strand" evidence="28">
    <location>
        <begin position="68"/>
        <end position="70"/>
    </location>
</feature>
<feature type="helix" evidence="28">
    <location>
        <begin position="72"/>
        <end position="76"/>
    </location>
</feature>
<feature type="strand" evidence="28">
    <location>
        <begin position="80"/>
        <end position="82"/>
    </location>
</feature>
<feature type="helix" evidence="28">
    <location>
        <begin position="94"/>
        <end position="96"/>
    </location>
</feature>
<feature type="strand" evidence="28">
    <location>
        <begin position="102"/>
        <end position="104"/>
    </location>
</feature>
<feature type="helix" evidence="28">
    <location>
        <begin position="114"/>
        <end position="116"/>
    </location>
</feature>
<feature type="strand" evidence="28">
    <location>
        <begin position="124"/>
        <end position="126"/>
    </location>
</feature>
<feature type="helix" evidence="28">
    <location>
        <begin position="136"/>
        <end position="138"/>
    </location>
</feature>
<feature type="strand" evidence="28">
    <location>
        <begin position="146"/>
        <end position="148"/>
    </location>
</feature>
<feature type="helix" evidence="28">
    <location>
        <begin position="158"/>
        <end position="162"/>
    </location>
</feature>
<feature type="strand" evidence="28">
    <location>
        <begin position="167"/>
        <end position="170"/>
    </location>
</feature>
<feature type="helix" evidence="28">
    <location>
        <begin position="180"/>
        <end position="184"/>
    </location>
</feature>
<feature type="strand" evidence="28">
    <location>
        <begin position="189"/>
        <end position="192"/>
    </location>
</feature>
<feature type="helix" evidence="28">
    <location>
        <begin position="202"/>
        <end position="204"/>
    </location>
</feature>
<feature type="strand" evidence="28">
    <location>
        <begin position="212"/>
        <end position="214"/>
    </location>
</feature>
<feature type="helix" evidence="28">
    <location>
        <begin position="224"/>
        <end position="226"/>
    </location>
</feature>
<feature type="strand" evidence="28">
    <location>
        <begin position="233"/>
        <end position="236"/>
    </location>
</feature>
<evidence type="ECO:0000250" key="1">
    <source>
        <dbReference type="UniProtKB" id="P0DQD2"/>
    </source>
</evidence>
<evidence type="ECO:0000255" key="2"/>
<evidence type="ECO:0000255" key="3">
    <source>
        <dbReference type="PROSITE-ProRule" id="PRU01116"/>
    </source>
</evidence>
<evidence type="ECO:0000269" key="4">
    <source>
    </source>
</evidence>
<evidence type="ECO:0000269" key="5">
    <source>
    </source>
</evidence>
<evidence type="ECO:0000269" key="6">
    <source>
    </source>
</evidence>
<evidence type="ECO:0000269" key="7">
    <source>
    </source>
</evidence>
<evidence type="ECO:0000269" key="8">
    <source>
    </source>
</evidence>
<evidence type="ECO:0000269" key="9">
    <source>
    </source>
</evidence>
<evidence type="ECO:0000269" key="10">
    <source>
    </source>
</evidence>
<evidence type="ECO:0000269" key="11">
    <source>
    </source>
</evidence>
<evidence type="ECO:0000269" key="12">
    <source>
    </source>
</evidence>
<evidence type="ECO:0000269" key="13">
    <source>
    </source>
</evidence>
<evidence type="ECO:0000269" key="14">
    <source>
    </source>
</evidence>
<evidence type="ECO:0000303" key="15">
    <source>
    </source>
</evidence>
<evidence type="ECO:0000305" key="16"/>
<evidence type="ECO:0000305" key="17">
    <source>
    </source>
</evidence>
<evidence type="ECO:0000305" key="18">
    <source>
    </source>
</evidence>
<evidence type="ECO:0000305" key="19">
    <source>
    </source>
</evidence>
<evidence type="ECO:0000305" key="20">
    <source>
    </source>
</evidence>
<evidence type="ECO:0000305" key="21">
    <source>
    </source>
</evidence>
<evidence type="ECO:0000305" key="22">
    <source>
    </source>
</evidence>
<evidence type="ECO:0007744" key="23">
    <source>
        <dbReference type="PDB" id="1D0B"/>
    </source>
</evidence>
<evidence type="ECO:0007744" key="24">
    <source>
        <dbReference type="PDB" id="1M9S"/>
    </source>
</evidence>
<evidence type="ECO:0007744" key="25">
    <source>
        <dbReference type="PDB" id="1OTM"/>
    </source>
</evidence>
<evidence type="ECO:0007744" key="26">
    <source>
        <dbReference type="PDB" id="1OTN"/>
    </source>
</evidence>
<evidence type="ECO:0007744" key="27">
    <source>
        <dbReference type="PDB" id="1OTO"/>
    </source>
</evidence>
<evidence type="ECO:0007829" key="28">
    <source>
        <dbReference type="PDB" id="6U12"/>
    </source>
</evidence>
<organism>
    <name type="scientific">Listeria monocytogenes serotype 1/2a (strain EGD / Mackaness)</name>
    <dbReference type="NCBI Taxonomy" id="1334565"/>
    <lineage>
        <taxon>Bacteria</taxon>
        <taxon>Bacillati</taxon>
        <taxon>Bacillota</taxon>
        <taxon>Bacilli</taxon>
        <taxon>Bacillales</taxon>
        <taxon>Listeriaceae</taxon>
        <taxon>Listeria</taxon>
    </lineage>
</organism>
<reference key="1">
    <citation type="journal article" date="1991" name="Cell">
        <title>Entry of L. monocytogenes into cells is mediated by internalin, a repeat protein reminiscent of surface antigens from Gram-positive cocci.</title>
        <authorList>
            <person name="Gaillard J.-L."/>
            <person name="Berche P."/>
            <person name="Frehel C."/>
            <person name="Gouin E."/>
            <person name="Cossart P."/>
        </authorList>
    </citation>
    <scope>NUCLEOTIDE SEQUENCE [GENOMIC DNA]</scope>
    <scope>DOMAIN</scope>
    <scope>DISRUPTION PHENOTYPE</scope>
    <source>
        <strain>EGD-SmR / Serovar 1/2a</strain>
    </source>
</reference>
<reference key="2">
    <citation type="submission" date="1998-10" db="EMBL/GenBank/DDBJ databases">
        <title>Nucleotide sequence of the internalin operon from Listeria monocytogenes EGD.</title>
        <authorList>
            <person name="Hain T."/>
            <person name="Pashalidis P."/>
            <person name="Hudel M."/>
            <person name="Chakraborty T."/>
            <person name="Domann E."/>
        </authorList>
    </citation>
    <scope>NUCLEOTIDE SEQUENCE [GENOMIC DNA]</scope>
    <source>
        <strain>EGD / Serovar 1/2a</strain>
    </source>
</reference>
<reference key="3">
    <citation type="journal article" date="1996" name="Science">
        <title>A role for phosphoinositide 3-kinase in bacterial invasion.</title>
        <authorList>
            <person name="Ireton K."/>
            <person name="Payrastre B."/>
            <person name="Chap H."/>
            <person name="Ogawa W."/>
            <person name="Sakaue H."/>
            <person name="Kasuga M."/>
            <person name="Cossart P."/>
        </authorList>
    </citation>
    <scope>PROBABLE FUNCTION IN STIMULATING HOST PI3-KINASE</scope>
    <scope>DISRUPTION PHENOTYPE</scope>
</reference>
<reference key="4">
    <citation type="journal article" date="1997" name="Science">
        <authorList>
            <person name="Ireton K."/>
            <person name="Payrastre B."/>
            <person name="Chap H."/>
            <person name="Ogawa W."/>
            <person name="Sakaue H."/>
            <person name="Kasuga M."/>
            <person name="Cossart P."/>
        </authorList>
    </citation>
    <scope>ERRATUM OF PUBMED:8864117</scope>
    <scope>CORRECTION OF FIGURE 3</scope>
</reference>
<reference key="5">
    <citation type="journal article" date="1997" name="Mol. Microbiol.">
        <title>InlB: an invasion protein of Listeria monocytogenes with a novel type of surface association.</title>
        <authorList>
            <person name="Braun L."/>
            <person name="Dramsi S."/>
            <person name="Dehoux P."/>
            <person name="Bierne H."/>
            <person name="Lindahl G."/>
            <person name="Cossart P."/>
        </authorList>
    </citation>
    <scope>FUNCTION</scope>
    <scope>SUBCELLULAR LOCATION</scope>
    <scope>DOMAIN</scope>
    <scope>DISRUPTION PHENOTYPE</scope>
    <source>
        <strain>EGD-SmR / Serovar 1/2a</strain>
    </source>
</reference>
<reference key="6">
    <citation type="journal article" date="1999" name="Mol. Microbiol.">
        <title>Interaction between the protein InlB of Listeria monocytogenes and lipoteichoic acid: a novel mechanism of protein association at the surface of Gram-positive bacteria.</title>
        <authorList>
            <person name="Jonquieres R."/>
            <person name="Bierne H."/>
            <person name="Fiedler F."/>
            <person name="Gounon P."/>
            <person name="Cossart P."/>
        </authorList>
    </citation>
    <scope>SUBCELLULAR LOCATION</scope>
    <scope>DOMAIN</scope>
    <scope>BINDS TO LIPOTEICHOIC ACID</scope>
    <source>
        <strain>EGD / Mackaness</strain>
    </source>
</reference>
<reference key="7">
    <citation type="journal article" date="2000" name="Cell">
        <title>InIB-dependent internalization of Listeria is mediated by the Met receptor tyrosine kinase.</title>
        <authorList>
            <person name="Shen Y."/>
            <person name="Naujokas M."/>
            <person name="Park M."/>
            <person name="Ireton K."/>
        </authorList>
    </citation>
    <scope>FUNCTION</scope>
    <scope>INTERACTION WITH MAMMALIAN MET</scope>
    <scope>PROBABLE RECEPTOR</scope>
    <scope>DOMAIN</scope>
    <scope>DISRUPTION PHENOTYPE</scope>
    <source>
        <strain>EGD / Mackaness</strain>
    </source>
</reference>
<reference key="8">
    <citation type="journal article" date="2000" name="EMBO J.">
        <title>gC1q-R/p32, a C1q-binding protein, is a receptor for the InlB invasion protein of Listeria monocytogenes.</title>
        <authorList>
            <person name="Braun L."/>
            <person name="Ghebrehiwet B."/>
            <person name="Cossart P."/>
        </authorList>
    </citation>
    <scope>FUNCTION</scope>
    <scope>INTERACTION WITH MAMMALIAN C1QBP</scope>
    <scope>POSSIBLE RECEPTOR</scope>
    <source>
        <strain>EGD / Mackaness</strain>
    </source>
</reference>
<reference key="9">
    <citation type="journal article" date="2004" name="Mol. Microbiol.">
        <title>GW domains of the Listeria monocytogenes invasion protein InlB are required for potentiation of Met activation.</title>
        <authorList>
            <person name="Banerjee M."/>
            <person name="Copp J."/>
            <person name="Vuga D."/>
            <person name="Marino M."/>
            <person name="Chapman T."/>
            <person name="van der Geer P."/>
            <person name="Ghosh P."/>
        </authorList>
    </citation>
    <scope>FUNCTION</scope>
    <scope>SUBUNIT</scope>
    <scope>DOMAIN</scope>
    <scope>DISRUPTION PHENOTYPE</scope>
    <source>
        <strain>EGD / Mackaness</strain>
    </source>
</reference>
<reference key="10">
    <citation type="journal article" date="2008" name="Arch. Microbiol.">
        <title>Listeria monocytogenes internalins bind to the human intestinal mucin MUC2.</title>
        <authorList>
            <person name="Linden S.K."/>
            <person name="Bierne H."/>
            <person name="Sabet C."/>
            <person name="Png C.W."/>
            <person name="Florin T.H."/>
            <person name="McGuckin M.A."/>
            <person name="Cossart P."/>
        </authorList>
    </citation>
    <scope>INTERACTION WITH HUMAN MUC2</scope>
</reference>
<reference evidence="23" key="11">
    <citation type="journal article" date="1999" name="Mol. Cell">
        <title>Structure of the inlB leucine-rich repeats, a domain that triggers host cell invasion by the bacterial pathogen L. monocytogenes.</title>
        <authorList>
            <person name="Marino M."/>
            <person name="Braun L."/>
            <person name="Cossart P."/>
            <person name="Ghosh P."/>
        </authorList>
    </citation>
    <scope>X-RAY CRYSTALLOGRAPHY (1.86 ANGSTROMS) OF 36-248 IN COMPLEX WITH CALCIUM</scope>
    <scope>COFACTOR</scope>
    <scope>DOMAIN</scope>
    <source>
        <strain>EGD-SmR / Serovar 1/2a</strain>
    </source>
</reference>
<reference evidence="24" key="12">
    <citation type="journal article" date="2002" name="EMBO J.">
        <title>GW domains of the Listeria monocytogenes invasion protein InlB are SH3-like and mediate binding to host ligands.</title>
        <authorList>
            <person name="Marino M."/>
            <person name="Banerjee M."/>
            <person name="Jonquieres R."/>
            <person name="Cossart P."/>
            <person name="Ghosh P."/>
        </authorList>
    </citation>
    <scope>X-RAY CRYSTALLOGRAPHY (2.65 ANGSTROMS) OF 36-630</scope>
    <scope>INTERACTION WITH HUMAN C1QBP</scope>
    <scope>DOMAIN</scope>
    <scope>HEPARIN-BINDING</scope>
    <source>
        <strain>EGD / Mackaness</strain>
    </source>
</reference>
<reference evidence="25 26 27" key="13">
    <citation type="journal article" date="2004" name="Biochem. Biophys. Res. Commun.">
        <title>Characterization of the calcium-binding sites of Listeria monocytogenes InlB.</title>
        <authorList>
            <person name="Marino M."/>
            <person name="Banerjee M."/>
            <person name="Copp J."/>
            <person name="Dramsi S."/>
            <person name="Chapman T."/>
            <person name="van der Geer P."/>
            <person name="Cossart P."/>
            <person name="Ghosh P."/>
        </authorList>
    </citation>
    <scope>X-RAY CRYSTALLOGRAPHY (1.93 ANGSTROMS) OF 36-248 MUTANTS FOR CALCIUM-BINDING</scope>
    <scope>COFACTOR</scope>
    <scope>DOMAIN</scope>
    <scope>MUTAGENESIS OF 51-ASP--ASP-59; ASP-51 AND ASP-59</scope>
    <source>
        <strain>EGD / Mackaness</strain>
    </source>
</reference>
<comment type="function">
    <text evidence="6 7 8 10 14 17 20 21">Mediates the entry of L.monocytogenes into normally non-phagocytic mammalian host cells (Probable) (PubMed:11081636, PubMed:9282740). Its host receptor is hepatocyte growth factor receptor (HGF receptor, a tyrosine kinase, MET) which is tyrosine-phosphorylated in response to InlB in human, green monkey, mouse and dog cell lines (PubMed:11081636, PubMed:15049825). Downstream adapter proteins GAB1 and CBL are phosphorylated in response to InlB, which also causes cell colony scattering (PubMed:11081636). InlB binding to mammalian cells is saturable and inhibited by EDTA; InlB-coated beads can be taken up by host cells (PubMed:10747014). Complement component 1 Q subcomponent-binding protein (gC1q-R, C1QBP) might act as an InlB receptor, leading to activation of PI3-kinase in green monkey cells (PubMed:10747014). Stimulation of Tyr-phosphorylation by InlB is antagonized by C1QBP, showing that potentiation of MET signaling via the GW domains is not mediated by C1QBP; the exact role of C1QBP remains to be determined (PubMed:15049825). Stimulation of Tyr-phosphorylation of MET by InlB is potentiated by the InlB GW domains and glycosaminoglycans such as heparin; exogenously added InlB, or hepatocyte growth factor (HGF) will also substitute for bacterial InlB, suggesting InlB promotes bacterial invasion by mimicking the hormone HGF (PubMed:15049825). May stimulate phosphatidylinositol 4,5-bisphosphate 3-kinase (PI3-kinase) in green monkey cells, has less effect in humans as PI3-kinase is constitutively and highly expressed in Caco cells (Probable). Binds heparin; C1QBP and heparin seem to bind to the GW domains (PubMed:12411480).</text>
</comment>
<comment type="cofactor">
    <cofactor evidence="5 9">
        <name>Ca(2+)</name>
        <dbReference type="ChEBI" id="CHEBI:29108"/>
    </cofactor>
    <text evidence="5 9">Binds 2 Ca(2+) ions; binding site 1 has a 10-fold higher affinity binding site 2 (PubMed:10635330, PubMed:15020228). Loss of Ca(2+)-binding has no measurable effect on host receptor activation or invasion by Listeria, suggesting ion-binding is fortuitous (PubMed:15020228).</text>
</comment>
<comment type="subunit">
    <text evidence="1 6 7 8 10 11">Monomer (PubMed:15049825). Interacts via its LRR repeats with the extracellular portion of mammalian host MET; MET can bind HGF, its endogenous ligand, and InlB simultaneously (PubMed:11081636). Probably forms a dimer upon interaction with host MET, which subsequently allows dimerization of the host MET and subsequent host signaling; dimerization probably occurs via the convex surface of InlB (By similarity). Interacts with host complement component 1 Q subcomponent-binding protein (C1QBP) (PubMed:10747014, PubMed:12411480). Interacts in vitro with human intestinal mucin-2 (MUC2) but not with mucin-1 (PubMed:18327567).</text>
</comment>
<comment type="subcellular location">
    <subcellularLocation>
        <location evidence="4 14">Secreted</location>
    </subcellularLocation>
    <subcellularLocation>
        <location evidence="14">Cell surface</location>
    </subcellularLocation>
    <subcellularLocation>
        <location evidence="4">Cell membrane</location>
    </subcellularLocation>
    <text evidence="4 10 14">Approximately half the protein is secreted (PubMed:10594817, PubMed:9282740). Cell surface association is mediated by the GW domains and can occur when protein is added externally; externally added protein confers invasion competence (PubMed:10594817, PubMed:15049825, PubMed:9282740). Replacement of the GW region with that of the Ami protein, which has 8 GW domains, localizes all the protein to the cell surface (PubMed:10594817, PubMed:9282740). Replacement of the GW region with GW5 and 6 of the Ami protein restores cell invasion when bacteria plus protein are added externally (PubMed:15049825). Protein is homogenously distributed but partially buried in the cell membrane; it binds non-covalently to lipoteichoic acid (LTA) on the bacterial membrane, and can be released from the surface by LTA (PubMed:10594817).</text>
</comment>
<comment type="domain">
    <text evidence="4 5 7 8 9 10 19 20 22">Has an N-terminal region with 8 leucine-rich repeats (LRR) and has 3 GW repeats in the C-terminus (Probable). Residues 241-319 form an Ig-like region, followed by a 72 residue-long flexible B repeat region (Probable) (PubMed:12411480). The GW repeats mediate non-covalent binding of the protein to lipoteichoic acid (LTA) on the bacterial membrane (PubMed:10594817). The GW domain mediates binding to host complement component 1 Q subcomponent-binding protein (gC1q-R, C1QBP) and to heparin; heparin binding dissociates InlB from the bacterial surface (PubMed:12411480). The LRR domain forms a curved tube, the N-terminus of which has a cap that binds 2 Ca(2+) ions (PubMed:10635330, PubMed:15020228). The LRR domain alone (31-241) binds mammalian MET and stimulates its Tyr-phosphorylation; the LRR plus Ig-like region (31-321) are required for receptor dimerization, and the GW domains, especially GW2 and GW3, potentiate MET activation (PubMed:11081636, PubMed:15049825).</text>
</comment>
<comment type="disruption phenotype">
    <text evidence="7 10 12 13 14">Deletion of both inlA and inlB prevents uptake of Listeria by human enterocyte-like cell line Caco-2 (PubMed:1905979). Single inlB deletion no longer invades various cell lines (PubMed:15049825, PubMed:8864117, PubMed:9282740). Decreased synthesis of phosphatidylinositol 3,4,5-trisphosphate (PIP3) in green monkey cells, decreased infection of host cells, decreased association of host PI3-kinase catalytic subunit with tyrosine-phosphorylated proteins (PubMed:8864117). Deletion no longer Tyr-phosphorylates mammalian MET (PubMed:11081636, PubMed:15049825).</text>
</comment>
<comment type="similarity">
    <text evidence="16">Belongs to the internalin family.</text>
</comment>
<sequence length="630" mass="71221">MKEKHNPRRKYCLISGLAIIFSLWIIIGNGAKVQAETITVSTPIKQIFPDDAFAETIKDNLKKKSVTDAVTQNELNSIDQIIANNSDIKSVQGIQYLPNVTKLFLNGNKLTDIKPLTNLKNLGWLFLDENKIKDLSSLKDLKKLKSLSLEHNGISDINGLVHLPQLESLYLGNNKITDITVLSRLTKLDTLSLEDNQISDIVPLAGLTKLQNLYLSKNHISDLRALAGLKNLDVLELFSQECLNKPINHQSNLVVPNTVKNTDGSLVTPEIISDDGDYEKPNVKWHLPEFTNEVSFIFYQPVTIGKAKARFHGRVTQPLKEVYTVSYDVDGTVIKTKVEAGTRITAPKPPTKQGYVFKGWYTEKNGGHEWNFNTDYMSGNDFTLYAVFKAETTEKTVNLTRYVKYIRGNAGIYKLPREDNSLKQGTLASHRCKALTVDREARNGGKLWYRLKNIGWTKAENLSLDRYDKMEYDKGVTAYARVRNASGNSVWTKPYNTAGAKHVNKLSVYQGKNMRILREAKTPITTWYQFSIGGKVIGWVDTRALNTFYKQSMEKPTRLTRYVSANKAGESYYKVPVADNPVKRGTLAKYKNQKLIVDCQATIEGQLWYRIRTSSTFIGWTKAANLRAQK</sequence>
<proteinExistence type="evidence at protein level"/>
<name>INLB_LISMG</name>
<accession>P0DQD3</accession>
<accession>P25147</accession>
<accession>Q9EXG1</accession>